<keyword id="KW-0963">Cytoplasm</keyword>
<keyword id="KW-0489">Methyltransferase</keyword>
<keyword id="KW-1185">Reference proteome</keyword>
<keyword id="KW-0949">S-adenosyl-L-methionine</keyword>
<keyword id="KW-0808">Transferase</keyword>
<keyword id="KW-0819">tRNA processing</keyword>
<name>TRMD_SPHAL</name>
<sequence length="245" mass="26542">MSFTAVPLTLYPDMFPGPLGHSMAGRALESGTWNCAPVQIRDFATDRHRTVDDTPAGGGAGMVLKADVLAGAIDHAMKAHPGLPVLAMTPRGTPITQARVRELAAGPGAIILCGRFEGFDERIFDARPIEQVSMGDIILSGGEMAALLLLDACIRLLPGVMGAASSGDDESFENGLLEYPHYTRPVTWEGRTIPEVLRSGDHAKIAAWRKQQAEEATRLRRPDLWERHIDARARPASGARRKEED</sequence>
<proteinExistence type="inferred from homology"/>
<evidence type="ECO:0000255" key="1">
    <source>
        <dbReference type="HAMAP-Rule" id="MF_00605"/>
    </source>
</evidence>
<reference key="1">
    <citation type="journal article" date="2009" name="Proc. Natl. Acad. Sci. U.S.A.">
        <title>The genomic basis of trophic strategy in marine bacteria.</title>
        <authorList>
            <person name="Lauro F.M."/>
            <person name="McDougald D."/>
            <person name="Thomas T."/>
            <person name="Williams T.J."/>
            <person name="Egan S."/>
            <person name="Rice S."/>
            <person name="DeMaere M.Z."/>
            <person name="Ting L."/>
            <person name="Ertan H."/>
            <person name="Johnson J."/>
            <person name="Ferriera S."/>
            <person name="Lapidus A."/>
            <person name="Anderson I."/>
            <person name="Kyrpides N."/>
            <person name="Munk A.C."/>
            <person name="Detter C."/>
            <person name="Han C.S."/>
            <person name="Brown M.V."/>
            <person name="Robb F.T."/>
            <person name="Kjelleberg S."/>
            <person name="Cavicchioli R."/>
        </authorList>
    </citation>
    <scope>NUCLEOTIDE SEQUENCE [LARGE SCALE GENOMIC DNA]</scope>
    <source>
        <strain>DSM 13593 / LMG 18877 / RB2256</strain>
    </source>
</reference>
<dbReference type="EC" id="2.1.1.228" evidence="1"/>
<dbReference type="EMBL" id="CP000356">
    <property type="protein sequence ID" value="ABF54425.1"/>
    <property type="molecule type" value="Genomic_DNA"/>
</dbReference>
<dbReference type="RefSeq" id="WP_011542990.1">
    <property type="nucleotide sequence ID" value="NC_008048.1"/>
</dbReference>
<dbReference type="SMR" id="Q1GPJ7"/>
<dbReference type="STRING" id="317655.Sala_2720"/>
<dbReference type="KEGG" id="sal:Sala_2720"/>
<dbReference type="eggNOG" id="COG0336">
    <property type="taxonomic scope" value="Bacteria"/>
</dbReference>
<dbReference type="HOGENOM" id="CLU_047363_0_1_5"/>
<dbReference type="OrthoDB" id="9807416at2"/>
<dbReference type="Proteomes" id="UP000006578">
    <property type="component" value="Chromosome"/>
</dbReference>
<dbReference type="GO" id="GO:0005829">
    <property type="term" value="C:cytosol"/>
    <property type="evidence" value="ECO:0007669"/>
    <property type="project" value="TreeGrafter"/>
</dbReference>
<dbReference type="GO" id="GO:0052906">
    <property type="term" value="F:tRNA (guanine(37)-N1)-methyltransferase activity"/>
    <property type="evidence" value="ECO:0007669"/>
    <property type="project" value="UniProtKB-UniRule"/>
</dbReference>
<dbReference type="GO" id="GO:0002939">
    <property type="term" value="P:tRNA N1-guanine methylation"/>
    <property type="evidence" value="ECO:0007669"/>
    <property type="project" value="TreeGrafter"/>
</dbReference>
<dbReference type="CDD" id="cd18080">
    <property type="entry name" value="TrmD-like"/>
    <property type="match status" value="1"/>
</dbReference>
<dbReference type="Gene3D" id="3.40.1280.10">
    <property type="match status" value="1"/>
</dbReference>
<dbReference type="Gene3D" id="1.10.1270.20">
    <property type="entry name" value="tRNA(m1g37)methyltransferase, domain 2"/>
    <property type="match status" value="1"/>
</dbReference>
<dbReference type="HAMAP" id="MF_00605">
    <property type="entry name" value="TrmD"/>
    <property type="match status" value="1"/>
</dbReference>
<dbReference type="InterPro" id="IPR029028">
    <property type="entry name" value="Alpha/beta_knot_MTases"/>
</dbReference>
<dbReference type="InterPro" id="IPR023148">
    <property type="entry name" value="tRNA_m1G_MeTrfase_C_sf"/>
</dbReference>
<dbReference type="InterPro" id="IPR002649">
    <property type="entry name" value="tRNA_m1G_MeTrfase_TrmD"/>
</dbReference>
<dbReference type="InterPro" id="IPR029026">
    <property type="entry name" value="tRNA_m1G_MTases_N"/>
</dbReference>
<dbReference type="InterPro" id="IPR016009">
    <property type="entry name" value="tRNA_MeTrfase_TRMD/TRM10"/>
</dbReference>
<dbReference type="NCBIfam" id="NF000648">
    <property type="entry name" value="PRK00026.1"/>
    <property type="match status" value="1"/>
</dbReference>
<dbReference type="NCBIfam" id="TIGR00088">
    <property type="entry name" value="trmD"/>
    <property type="match status" value="1"/>
</dbReference>
<dbReference type="PANTHER" id="PTHR46417">
    <property type="entry name" value="TRNA (GUANINE-N(1)-)-METHYLTRANSFERASE"/>
    <property type="match status" value="1"/>
</dbReference>
<dbReference type="PANTHER" id="PTHR46417:SF1">
    <property type="entry name" value="TRNA (GUANINE-N(1)-)-METHYLTRANSFERASE"/>
    <property type="match status" value="1"/>
</dbReference>
<dbReference type="Pfam" id="PF01746">
    <property type="entry name" value="tRNA_m1G_MT"/>
    <property type="match status" value="1"/>
</dbReference>
<dbReference type="PIRSF" id="PIRSF000386">
    <property type="entry name" value="tRNA_mtase"/>
    <property type="match status" value="1"/>
</dbReference>
<dbReference type="SUPFAM" id="SSF75217">
    <property type="entry name" value="alpha/beta knot"/>
    <property type="match status" value="1"/>
</dbReference>
<gene>
    <name evidence="1" type="primary">trmD</name>
    <name type="ordered locus">Sala_2720</name>
</gene>
<organism>
    <name type="scientific">Sphingopyxis alaskensis (strain DSM 13593 / LMG 18877 / RB2256)</name>
    <name type="common">Sphingomonas alaskensis</name>
    <dbReference type="NCBI Taxonomy" id="317655"/>
    <lineage>
        <taxon>Bacteria</taxon>
        <taxon>Pseudomonadati</taxon>
        <taxon>Pseudomonadota</taxon>
        <taxon>Alphaproteobacteria</taxon>
        <taxon>Sphingomonadales</taxon>
        <taxon>Sphingomonadaceae</taxon>
        <taxon>Sphingopyxis</taxon>
    </lineage>
</organism>
<accession>Q1GPJ7</accession>
<comment type="function">
    <text evidence="1">Specifically methylates guanosine-37 in various tRNAs.</text>
</comment>
<comment type="catalytic activity">
    <reaction evidence="1">
        <text>guanosine(37) in tRNA + S-adenosyl-L-methionine = N(1)-methylguanosine(37) in tRNA + S-adenosyl-L-homocysteine + H(+)</text>
        <dbReference type="Rhea" id="RHEA:36899"/>
        <dbReference type="Rhea" id="RHEA-COMP:10145"/>
        <dbReference type="Rhea" id="RHEA-COMP:10147"/>
        <dbReference type="ChEBI" id="CHEBI:15378"/>
        <dbReference type="ChEBI" id="CHEBI:57856"/>
        <dbReference type="ChEBI" id="CHEBI:59789"/>
        <dbReference type="ChEBI" id="CHEBI:73542"/>
        <dbReference type="ChEBI" id="CHEBI:74269"/>
        <dbReference type="EC" id="2.1.1.228"/>
    </reaction>
</comment>
<comment type="subunit">
    <text evidence="1">Homodimer.</text>
</comment>
<comment type="subcellular location">
    <subcellularLocation>
        <location evidence="1">Cytoplasm</location>
    </subcellularLocation>
</comment>
<comment type="similarity">
    <text evidence="1">Belongs to the RNA methyltransferase TrmD family.</text>
</comment>
<feature type="chain" id="PRO_0000257472" description="tRNA (guanine-N(1)-)-methyltransferase">
    <location>
        <begin position="1"/>
        <end position="245"/>
    </location>
</feature>
<feature type="binding site" evidence="1">
    <location>
        <position position="114"/>
    </location>
    <ligand>
        <name>S-adenosyl-L-methionine</name>
        <dbReference type="ChEBI" id="CHEBI:59789"/>
    </ligand>
</feature>
<protein>
    <recommendedName>
        <fullName evidence="1">tRNA (guanine-N(1)-)-methyltransferase</fullName>
        <ecNumber evidence="1">2.1.1.228</ecNumber>
    </recommendedName>
    <alternativeName>
        <fullName evidence="1">M1G-methyltransferase</fullName>
    </alternativeName>
    <alternativeName>
        <fullName evidence="1">tRNA [GM37] methyltransferase</fullName>
    </alternativeName>
</protein>